<name>WECF_SHIFL</name>
<proteinExistence type="inferred from homology"/>
<evidence type="ECO:0000255" key="1">
    <source>
        <dbReference type="HAMAP-Rule" id="MF_01002"/>
    </source>
</evidence>
<dbReference type="EC" id="2.4.1.325" evidence="1"/>
<dbReference type="EMBL" id="AE005674">
    <property type="protein sequence ID" value="AAN45304.1"/>
    <property type="molecule type" value="Genomic_DNA"/>
</dbReference>
<dbReference type="EMBL" id="AE014073">
    <property type="protein sequence ID" value="AAP18894.1"/>
    <property type="molecule type" value="Genomic_DNA"/>
</dbReference>
<dbReference type="RefSeq" id="WP_000217247.1">
    <property type="nucleotide sequence ID" value="NZ_WPGW01000028.1"/>
</dbReference>
<dbReference type="SMR" id="Q83PH8"/>
<dbReference type="STRING" id="198214.SF3867"/>
<dbReference type="PaxDb" id="198214-SF3867"/>
<dbReference type="KEGG" id="sfl:SF3867"/>
<dbReference type="KEGG" id="sfx:S3893"/>
<dbReference type="PATRIC" id="fig|198214.7.peg.4557"/>
<dbReference type="HOGENOM" id="CLU_066584_0_0_6"/>
<dbReference type="UniPathway" id="UPA00566"/>
<dbReference type="Proteomes" id="UP000001006">
    <property type="component" value="Chromosome"/>
</dbReference>
<dbReference type="Proteomes" id="UP000002673">
    <property type="component" value="Chromosome"/>
</dbReference>
<dbReference type="GO" id="GO:0005886">
    <property type="term" value="C:plasma membrane"/>
    <property type="evidence" value="ECO:0007669"/>
    <property type="project" value="UniProtKB-SubCell"/>
</dbReference>
<dbReference type="GO" id="GO:0102031">
    <property type="term" value="F:4-acetamido-4,6-dideoxy-D-galactose transferase activity"/>
    <property type="evidence" value="ECO:0007669"/>
    <property type="project" value="UniProtKB-EC"/>
</dbReference>
<dbReference type="GO" id="GO:0008417">
    <property type="term" value="F:fucosyltransferase activity"/>
    <property type="evidence" value="ECO:0007669"/>
    <property type="project" value="InterPro"/>
</dbReference>
<dbReference type="GO" id="GO:0009246">
    <property type="term" value="P:enterobacterial common antigen biosynthetic process"/>
    <property type="evidence" value="ECO:0007669"/>
    <property type="project" value="UniProtKB-UniRule"/>
</dbReference>
<dbReference type="GO" id="GO:0036065">
    <property type="term" value="P:fucosylation"/>
    <property type="evidence" value="ECO:0007669"/>
    <property type="project" value="InterPro"/>
</dbReference>
<dbReference type="HAMAP" id="MF_01002">
    <property type="entry name" value="WecF_RffT"/>
    <property type="match status" value="1"/>
</dbReference>
<dbReference type="InterPro" id="IPR009993">
    <property type="entry name" value="WecF"/>
</dbReference>
<dbReference type="NCBIfam" id="NF002752">
    <property type="entry name" value="PRK02797.1-1"/>
    <property type="match status" value="1"/>
</dbReference>
<dbReference type="NCBIfam" id="NF002753">
    <property type="entry name" value="PRK02797.1-2"/>
    <property type="match status" value="1"/>
</dbReference>
<dbReference type="NCBIfam" id="NF002754">
    <property type="entry name" value="PRK02797.1-3"/>
    <property type="match status" value="1"/>
</dbReference>
<dbReference type="Pfam" id="PF07429">
    <property type="entry name" value="Glyco_transf_56"/>
    <property type="match status" value="1"/>
</dbReference>
<comment type="function">
    <text evidence="1">Catalyzes the synthesis of Und-PP-GlcNAc-ManNAcA-Fuc4NAc (Lipid III), the third lipid-linked intermediate involved in ECA synthesis.</text>
</comment>
<comment type="catalytic activity">
    <reaction evidence="1">
        <text>beta-D-ManNAcA-(1-&gt;4)-alpha-D-GlcNAc-di-trans,octa-cis-undecaprenyl diphosphate + dTDP-4-acetamido-4,6-dideoxy-alpha-D-galactose = alpha-D-FucNAc4-(1-&gt;4)-beta-D-ManNAcA-(1-&gt;4)-D-GlcNAc-undecaprenyl diphosphate + dTDP + H(+)</text>
        <dbReference type="Rhea" id="RHEA:28759"/>
        <dbReference type="ChEBI" id="CHEBI:15378"/>
        <dbReference type="ChEBI" id="CHEBI:58369"/>
        <dbReference type="ChEBI" id="CHEBI:61495"/>
        <dbReference type="ChEBI" id="CHEBI:61496"/>
        <dbReference type="ChEBI" id="CHEBI:68493"/>
        <dbReference type="EC" id="2.4.1.325"/>
    </reaction>
</comment>
<comment type="pathway">
    <text evidence="1">Bacterial outer membrane biogenesis; enterobacterial common antigen biosynthesis.</text>
</comment>
<comment type="subcellular location">
    <subcellularLocation>
        <location evidence="1">Cell inner membrane</location>
        <topology evidence="1">Peripheral membrane protein</topology>
    </subcellularLocation>
</comment>
<comment type="similarity">
    <text evidence="1">Belongs to the glycosyltransferase 56 family.</text>
</comment>
<gene>
    <name evidence="1" type="primary">wecF</name>
    <name evidence="1" type="synonym">rffT</name>
    <name type="ordered locus">SF3867</name>
    <name type="ordered locus">S3893</name>
</gene>
<reference key="1">
    <citation type="journal article" date="2002" name="Nucleic Acids Res.">
        <title>Genome sequence of Shigella flexneri 2a: insights into pathogenicity through comparison with genomes of Escherichia coli K12 and O157.</title>
        <authorList>
            <person name="Jin Q."/>
            <person name="Yuan Z."/>
            <person name="Xu J."/>
            <person name="Wang Y."/>
            <person name="Shen Y."/>
            <person name="Lu W."/>
            <person name="Wang J."/>
            <person name="Liu H."/>
            <person name="Yang J."/>
            <person name="Yang F."/>
            <person name="Zhang X."/>
            <person name="Zhang J."/>
            <person name="Yang G."/>
            <person name="Wu H."/>
            <person name="Qu D."/>
            <person name="Dong J."/>
            <person name="Sun L."/>
            <person name="Xue Y."/>
            <person name="Zhao A."/>
            <person name="Gao Y."/>
            <person name="Zhu J."/>
            <person name="Kan B."/>
            <person name="Ding K."/>
            <person name="Chen S."/>
            <person name="Cheng H."/>
            <person name="Yao Z."/>
            <person name="He B."/>
            <person name="Chen R."/>
            <person name="Ma D."/>
            <person name="Qiang B."/>
            <person name="Wen Y."/>
            <person name="Hou Y."/>
            <person name="Yu J."/>
        </authorList>
    </citation>
    <scope>NUCLEOTIDE SEQUENCE [LARGE SCALE GENOMIC DNA]</scope>
    <source>
        <strain>301 / Serotype 2a</strain>
    </source>
</reference>
<reference key="2">
    <citation type="journal article" date="2003" name="Infect. Immun.">
        <title>Complete genome sequence and comparative genomics of Shigella flexneri serotype 2a strain 2457T.</title>
        <authorList>
            <person name="Wei J."/>
            <person name="Goldberg M.B."/>
            <person name="Burland V."/>
            <person name="Venkatesan M.M."/>
            <person name="Deng W."/>
            <person name="Fournier G."/>
            <person name="Mayhew G.F."/>
            <person name="Plunkett G. III"/>
            <person name="Rose D.J."/>
            <person name="Darling A."/>
            <person name="Mau B."/>
            <person name="Perna N.T."/>
            <person name="Payne S.M."/>
            <person name="Runyen-Janecky L.J."/>
            <person name="Zhou S."/>
            <person name="Schwartz D.C."/>
            <person name="Blattner F.R."/>
        </authorList>
    </citation>
    <scope>NUCLEOTIDE SEQUENCE [LARGE SCALE GENOMIC DNA]</scope>
    <source>
        <strain>ATCC 700930 / 2457T / Serotype 2a</strain>
    </source>
</reference>
<organism>
    <name type="scientific">Shigella flexneri</name>
    <dbReference type="NCBI Taxonomy" id="623"/>
    <lineage>
        <taxon>Bacteria</taxon>
        <taxon>Pseudomonadati</taxon>
        <taxon>Pseudomonadota</taxon>
        <taxon>Gammaproteobacteria</taxon>
        <taxon>Enterobacterales</taxon>
        <taxon>Enterobacteriaceae</taxon>
        <taxon>Shigella</taxon>
    </lineage>
</organism>
<feature type="chain" id="PRO_0000216189" description="TDP-N-acetylfucosamine:lipid II N-acetylfucosaminyltransferase">
    <location>
        <begin position="1"/>
        <end position="359"/>
    </location>
</feature>
<protein>
    <recommendedName>
        <fullName evidence="1">TDP-N-acetylfucosamine:lipid II N-acetylfucosaminyltransferase</fullName>
        <ecNumber evidence="1">2.4.1.325</ecNumber>
    </recommendedName>
    <alternativeName>
        <fullName evidence="1">4-alpha-L-fucosyltransferase</fullName>
    </alternativeName>
    <alternativeName>
        <fullName evidence="1">TDP-Fuc4NAc:lipid II Fuc4NAc transferase</fullName>
        <shortName evidence="1">Fuc4NAc transferase</shortName>
    </alternativeName>
</protein>
<accession>Q83PH8</accession>
<keyword id="KW-0997">Cell inner membrane</keyword>
<keyword id="KW-1003">Cell membrane</keyword>
<keyword id="KW-0328">Glycosyltransferase</keyword>
<keyword id="KW-0472">Membrane</keyword>
<keyword id="KW-1185">Reference proteome</keyword>
<keyword id="KW-0808">Transferase</keyword>
<sequence length="359" mass="40514">MTVLIHVLGSDIPHHNRTVLRFFNDALAATSEHAREFMVVGKDDGLSDSCPALSVQFFPGKKSLAEAVIAKAKANRQQRFFFHGQFNPTLWLALLSGGIKPSQFFWHIWGADLYELSSGLRYKLFYPLRRLAQKRVGCVFATRGDLSFFAKTHPKVRGELLYFPTRMDPSLNTMANDRQREGKMTILVGNSGDRSNEHVAALRAVHQQFGDTVKVVVPMGYPPNNEAYIEEVRQAGLELFSEENLQILSEKLEFDAYLALLRQCDLGYFIFARQQGIGTLCLLIQAGIPCVLNRENPFWQDMTEQHLPVLFTTDDLNEDIVREAQRQLASADKNTIAFFSPNYLQGWQRALAIAAGEVA</sequence>